<sequence>MWTKPSFTDLRLGFEVTLYFANR</sequence>
<organism>
    <name type="scientific">Pseudomonas paraeruginosa (strain DSM 24068 / PA7)</name>
    <name type="common">Pseudomonas aeruginosa (strain PA7)</name>
    <dbReference type="NCBI Taxonomy" id="381754"/>
    <lineage>
        <taxon>Bacteria</taxon>
        <taxon>Pseudomonadati</taxon>
        <taxon>Pseudomonadota</taxon>
        <taxon>Gammaproteobacteria</taxon>
        <taxon>Pseudomonadales</taxon>
        <taxon>Pseudomonadaceae</taxon>
        <taxon>Pseudomonas</taxon>
        <taxon>Pseudomonas paraeruginosa</taxon>
    </lineage>
</organism>
<dbReference type="EMBL" id="CP000744">
    <property type="protein sequence ID" value="ABR85293.1"/>
    <property type="molecule type" value="Genomic_DNA"/>
</dbReference>
<dbReference type="RefSeq" id="WP_003106462.1">
    <property type="nucleotide sequence ID" value="NC_009656.1"/>
</dbReference>
<dbReference type="GeneID" id="79913893"/>
<dbReference type="KEGG" id="pap:PSPA7_3309"/>
<dbReference type="HOGENOM" id="CLU_219131_1_0_6"/>
<dbReference type="UniPathway" id="UPA00539"/>
<dbReference type="Proteomes" id="UP000001582">
    <property type="component" value="Chromosome"/>
</dbReference>
<dbReference type="GO" id="GO:0018189">
    <property type="term" value="P:pyrroloquinoline quinone biosynthetic process"/>
    <property type="evidence" value="ECO:0007669"/>
    <property type="project" value="UniProtKB-UniRule"/>
</dbReference>
<dbReference type="HAMAP" id="MF_00656">
    <property type="entry name" value="PQQ_syn_PqqA"/>
    <property type="match status" value="1"/>
</dbReference>
<dbReference type="InterPro" id="IPR011725">
    <property type="entry name" value="PQQ_synth_PqqA"/>
</dbReference>
<dbReference type="NCBIfam" id="TIGR02107">
    <property type="entry name" value="PQQ_syn_pqqA"/>
    <property type="match status" value="1"/>
</dbReference>
<dbReference type="Pfam" id="PF08042">
    <property type="entry name" value="PqqA"/>
    <property type="match status" value="1"/>
</dbReference>
<accession>A6V6I4</accession>
<proteinExistence type="inferred from homology"/>
<reference key="1">
    <citation type="submission" date="2007-06" db="EMBL/GenBank/DDBJ databases">
        <authorList>
            <person name="Dodson R.J."/>
            <person name="Harkins D."/>
            <person name="Paulsen I.T."/>
        </authorList>
    </citation>
    <scope>NUCLEOTIDE SEQUENCE [LARGE SCALE GENOMIC DNA]</scope>
    <source>
        <strain>DSM 24068 / PA7</strain>
    </source>
</reference>
<evidence type="ECO:0000255" key="1">
    <source>
        <dbReference type="HAMAP-Rule" id="MF_00656"/>
    </source>
</evidence>
<gene>
    <name evidence="1" type="primary">pqqA</name>
    <name type="ordered locus">PSPA7_3309</name>
</gene>
<protein>
    <recommendedName>
        <fullName evidence="1">Coenzyme PQQ synthesis protein A</fullName>
    </recommendedName>
    <alternativeName>
        <fullName evidence="1">Pyrroloquinoline quinone biosynthesis protein A</fullName>
    </alternativeName>
</protein>
<name>PQQA_PSEP7</name>
<keyword id="KW-0884">PQQ biosynthesis</keyword>
<comment type="function">
    <text evidence="1">Required for coenzyme pyrroloquinoline quinone (PQQ) biosynthesis. PQQ is probably formed by cross-linking a specific glutamate to a specific tyrosine residue and excising these residues from the peptide.</text>
</comment>
<comment type="pathway">
    <text evidence="1">Cofactor biosynthesis; pyrroloquinoline quinone biosynthesis.</text>
</comment>
<comment type="similarity">
    <text evidence="1">Belongs to the PqqA family.</text>
</comment>
<feature type="chain" id="PRO_1000061698" description="Coenzyme PQQ synthesis protein A">
    <location>
        <begin position="1"/>
        <end position="23"/>
    </location>
</feature>
<feature type="cross-link" description="Pyrroloquinoline quinone (Glu-Tyr)" evidence="1">
    <location>
        <begin position="15"/>
        <end position="19"/>
    </location>
</feature>